<proteinExistence type="inferred from homology"/>
<keyword id="KW-0597">Phosphoprotein</keyword>
<keyword id="KW-1185">Reference proteome</keyword>
<organism>
    <name type="scientific">Rattus norvegicus</name>
    <name type="common">Rat</name>
    <dbReference type="NCBI Taxonomy" id="10116"/>
    <lineage>
        <taxon>Eukaryota</taxon>
        <taxon>Metazoa</taxon>
        <taxon>Chordata</taxon>
        <taxon>Craniata</taxon>
        <taxon>Vertebrata</taxon>
        <taxon>Euteleostomi</taxon>
        <taxon>Mammalia</taxon>
        <taxon>Eutheria</taxon>
        <taxon>Euarchontoglires</taxon>
        <taxon>Glires</taxon>
        <taxon>Rodentia</taxon>
        <taxon>Myomorpha</taxon>
        <taxon>Muroidea</taxon>
        <taxon>Muridae</taxon>
        <taxon>Murinae</taxon>
        <taxon>Rattus</taxon>
    </lineage>
</organism>
<protein>
    <recommendedName>
        <fullName>UPF0449 protein C19orf25 homolog</fullName>
    </recommendedName>
</protein>
<evidence type="ECO:0000250" key="1">
    <source>
        <dbReference type="UniProtKB" id="Q9D7E4"/>
    </source>
</evidence>
<evidence type="ECO:0000305" key="2"/>
<reference key="1">
    <citation type="journal article" date="2004" name="Genome Res.">
        <title>The status, quality, and expansion of the NIH full-length cDNA project: the Mammalian Gene Collection (MGC).</title>
        <authorList>
            <consortium name="The MGC Project Team"/>
        </authorList>
    </citation>
    <scope>NUCLEOTIDE SEQUENCE [LARGE SCALE MRNA]</scope>
    <source>
        <tissue>Kidney</tissue>
    </source>
</reference>
<dbReference type="EMBL" id="BC079167">
    <property type="protein sequence ID" value="AAH79167.1"/>
    <property type="molecule type" value="mRNA"/>
</dbReference>
<dbReference type="RefSeq" id="NP_001007658.1">
    <property type="nucleotide sequence ID" value="NM_001007657.1"/>
</dbReference>
<dbReference type="SMR" id="Q6AY72"/>
<dbReference type="FunCoup" id="Q6AY72">
    <property type="interactions" value="423"/>
</dbReference>
<dbReference type="STRING" id="10116.ENSRNOP00000021940"/>
<dbReference type="iPTMnet" id="Q6AY72"/>
<dbReference type="PhosphoSitePlus" id="Q6AY72"/>
<dbReference type="jPOST" id="Q6AY72"/>
<dbReference type="PaxDb" id="10116-ENSRNOP00000021940"/>
<dbReference type="GeneID" id="299612"/>
<dbReference type="KEGG" id="rno:299612"/>
<dbReference type="UCSC" id="RGD:1359127">
    <property type="organism name" value="rat"/>
</dbReference>
<dbReference type="AGR" id="RGD:1359127"/>
<dbReference type="CTD" id="299612"/>
<dbReference type="RGD" id="1359127">
    <property type="gene designation" value="C7h19orf25"/>
</dbReference>
<dbReference type="eggNOG" id="ENOG502SDTN">
    <property type="taxonomic scope" value="Eukaryota"/>
</dbReference>
<dbReference type="HOGENOM" id="CLU_141103_1_0_1"/>
<dbReference type="InParanoid" id="Q6AY72"/>
<dbReference type="OrthoDB" id="6129359at2759"/>
<dbReference type="PhylomeDB" id="Q6AY72"/>
<dbReference type="TreeFam" id="TF330719"/>
<dbReference type="PRO" id="PR:Q6AY72"/>
<dbReference type="Proteomes" id="UP000002494">
    <property type="component" value="Chromosome 7"/>
</dbReference>
<dbReference type="Bgee" id="ENSRNOG00000016399">
    <property type="expression patterns" value="Expressed in stomach and 20 other cell types or tissues"/>
</dbReference>
<dbReference type="InterPro" id="IPR028227">
    <property type="entry name" value="UPF0449"/>
</dbReference>
<dbReference type="PANTHER" id="PTHR34766">
    <property type="entry name" value="UPF0449 PROTEIN C19ORF25"/>
    <property type="match status" value="1"/>
</dbReference>
<dbReference type="PANTHER" id="PTHR34766:SF1">
    <property type="entry name" value="UPF0449 PROTEIN C19ORF25"/>
    <property type="match status" value="1"/>
</dbReference>
<dbReference type="Pfam" id="PF15136">
    <property type="entry name" value="UPF0449"/>
    <property type="match status" value="1"/>
</dbReference>
<sequence length="109" mass="12143">MSSKAKKRVVLPTRPAPPTVEQILEDVRGAPAQDPVFTALAPEDPLEPLPRAEDSEVQQEQIYQQSRTYVAMNERLRQAGDALRQKFDGLRQAGQRLEQDISQVTSATS</sequence>
<comment type="similarity">
    <text evidence="2">Belongs to the UPF0449 family.</text>
</comment>
<feature type="chain" id="PRO_0000294126" description="UPF0449 protein C19orf25 homolog">
    <location>
        <begin position="1"/>
        <end position="109"/>
    </location>
</feature>
<feature type="modified residue" description="Phosphotyrosine" evidence="1">
    <location>
        <position position="63"/>
    </location>
</feature>
<name>CS025_RAT</name>
<accession>Q6AY72</accession>